<organism>
    <name type="scientific">Takifugu rubripes</name>
    <name type="common">Japanese pufferfish</name>
    <name type="synonym">Fugu rubripes</name>
    <dbReference type="NCBI Taxonomy" id="31033"/>
    <lineage>
        <taxon>Eukaryota</taxon>
        <taxon>Metazoa</taxon>
        <taxon>Chordata</taxon>
        <taxon>Craniata</taxon>
        <taxon>Vertebrata</taxon>
        <taxon>Euteleostomi</taxon>
        <taxon>Actinopterygii</taxon>
        <taxon>Neopterygii</taxon>
        <taxon>Teleostei</taxon>
        <taxon>Neoteleostei</taxon>
        <taxon>Acanthomorphata</taxon>
        <taxon>Eupercaria</taxon>
        <taxon>Tetraodontiformes</taxon>
        <taxon>Tetradontoidea</taxon>
        <taxon>Tetraodontidae</taxon>
        <taxon>Takifugu</taxon>
    </lineage>
</organism>
<keyword id="KW-0963">Cytoplasm</keyword>
<keyword id="KW-0539">Nucleus</keyword>
<keyword id="KW-1185">Reference proteome</keyword>
<keyword id="KW-0677">Repeat</keyword>
<protein>
    <recommendedName>
        <fullName>Huntingtin</fullName>
    </recommendedName>
    <alternativeName>
        <fullName>Huntington disease protein homolog</fullName>
        <shortName>HD protein homolog</shortName>
    </alternativeName>
</protein>
<feature type="chain" id="PRO_0000083941" description="Huntingtin">
    <location>
        <begin position="1"/>
        <end position="3148"/>
    </location>
</feature>
<feature type="repeat" description="HEAT 1">
    <location>
        <begin position="149"/>
        <end position="186"/>
    </location>
</feature>
<feature type="repeat" description="HEAT 2">
    <location>
        <begin position="191"/>
        <end position="228"/>
    </location>
</feature>
<feature type="repeat" description="HEAT 3">
    <location>
        <begin position="760"/>
        <end position="797"/>
    </location>
</feature>
<feature type="repeat" description="HEAT 4">
    <location>
        <begin position="861"/>
        <end position="898"/>
    </location>
</feature>
<feature type="repeat" description="HEAT 5">
    <location>
        <begin position="1419"/>
        <end position="1456"/>
    </location>
</feature>
<feature type="region of interest" description="Disordered" evidence="3">
    <location>
        <begin position="428"/>
        <end position="532"/>
    </location>
</feature>
<feature type="region of interest" description="Disordered" evidence="3">
    <location>
        <begin position="557"/>
        <end position="622"/>
    </location>
</feature>
<feature type="region of interest" description="Disordered" evidence="3">
    <location>
        <begin position="1025"/>
        <end position="1047"/>
    </location>
</feature>
<feature type="region of interest" description="Disordered" evidence="3">
    <location>
        <begin position="1098"/>
        <end position="1117"/>
    </location>
</feature>
<feature type="region of interest" description="Disordered" evidence="3">
    <location>
        <begin position="1158"/>
        <end position="1215"/>
    </location>
</feature>
<feature type="region of interest" description="Disordered" evidence="3">
    <location>
        <begin position="1712"/>
        <end position="1735"/>
    </location>
</feature>
<feature type="region of interest" description="Disordered" evidence="3">
    <location>
        <begin position="2072"/>
        <end position="2091"/>
    </location>
</feature>
<feature type="region of interest" description="Disordered" evidence="3">
    <location>
        <begin position="2639"/>
        <end position="2664"/>
    </location>
</feature>
<feature type="short sequence motif" description="Nuclear export signal" evidence="1">
    <location>
        <begin position="2398"/>
        <end position="2407"/>
    </location>
</feature>
<feature type="compositionally biased region" description="Polar residues" evidence="3">
    <location>
        <begin position="428"/>
        <end position="451"/>
    </location>
</feature>
<feature type="compositionally biased region" description="Polar residues" evidence="3">
    <location>
        <begin position="475"/>
        <end position="486"/>
    </location>
</feature>
<feature type="compositionally biased region" description="Polar residues" evidence="3">
    <location>
        <begin position="516"/>
        <end position="526"/>
    </location>
</feature>
<feature type="compositionally biased region" description="Basic and acidic residues" evidence="3">
    <location>
        <begin position="602"/>
        <end position="621"/>
    </location>
</feature>
<feature type="compositionally biased region" description="Low complexity" evidence="3">
    <location>
        <begin position="1025"/>
        <end position="1042"/>
    </location>
</feature>
<feature type="compositionally biased region" description="Low complexity" evidence="3">
    <location>
        <begin position="1105"/>
        <end position="1115"/>
    </location>
</feature>
<feature type="compositionally biased region" description="Polar residues" evidence="3">
    <location>
        <begin position="1201"/>
        <end position="1215"/>
    </location>
</feature>
<feature type="compositionally biased region" description="Polar residues" evidence="3">
    <location>
        <begin position="1712"/>
        <end position="1730"/>
    </location>
</feature>
<feature type="compositionally biased region" description="Low complexity" evidence="3">
    <location>
        <begin position="2072"/>
        <end position="2084"/>
    </location>
</feature>
<feature type="compositionally biased region" description="Acidic residues" evidence="3">
    <location>
        <begin position="2639"/>
        <end position="2649"/>
    </location>
</feature>
<feature type="compositionally biased region" description="Pro residues" evidence="3">
    <location>
        <begin position="2650"/>
        <end position="2659"/>
    </location>
</feature>
<dbReference type="EMBL" id="X82939">
    <property type="protein sequence ID" value="CAA58112.1"/>
    <property type="molecule type" value="Genomic_DNA"/>
</dbReference>
<dbReference type="SMR" id="P51112"/>
<dbReference type="STRING" id="31033.ENSTRUP00000061224"/>
<dbReference type="eggNOG" id="ENOG502QR1D">
    <property type="taxonomic scope" value="Eukaryota"/>
</dbReference>
<dbReference type="HOGENOM" id="CLU_000428_0_0_1"/>
<dbReference type="InParanoid" id="P51112"/>
<dbReference type="Proteomes" id="UP000005226">
    <property type="component" value="Unplaced"/>
</dbReference>
<dbReference type="GO" id="GO:0005737">
    <property type="term" value="C:cytoplasm"/>
    <property type="evidence" value="ECO:0007669"/>
    <property type="project" value="UniProtKB-SubCell"/>
</dbReference>
<dbReference type="GO" id="GO:0005634">
    <property type="term" value="C:nucleus"/>
    <property type="evidence" value="ECO:0007669"/>
    <property type="project" value="UniProtKB-SubCell"/>
</dbReference>
<dbReference type="FunFam" id="1.25.10.10:FF:000273">
    <property type="entry name" value="Huntingtin"/>
    <property type="match status" value="1"/>
</dbReference>
<dbReference type="FunFam" id="1.25.10.10:FF:000356">
    <property type="entry name" value="Putative huntingtin"/>
    <property type="match status" value="1"/>
</dbReference>
<dbReference type="Gene3D" id="1.25.10.10">
    <property type="entry name" value="Leucine-rich Repeat Variant"/>
    <property type="match status" value="2"/>
</dbReference>
<dbReference type="InterPro" id="IPR011989">
    <property type="entry name" value="ARM-like"/>
</dbReference>
<dbReference type="InterPro" id="IPR016024">
    <property type="entry name" value="ARM-type_fold"/>
</dbReference>
<dbReference type="InterPro" id="IPR021133">
    <property type="entry name" value="HEAT_type_2"/>
</dbReference>
<dbReference type="InterPro" id="IPR048412">
    <property type="entry name" value="Htt_bridge"/>
</dbReference>
<dbReference type="InterPro" id="IPR048413">
    <property type="entry name" value="Htt_C-HEAT_rpt"/>
</dbReference>
<dbReference type="InterPro" id="IPR048411">
    <property type="entry name" value="Htt_N_HEAT_rpt-1"/>
</dbReference>
<dbReference type="InterPro" id="IPR000091">
    <property type="entry name" value="Huntingtin"/>
</dbReference>
<dbReference type="InterPro" id="IPR028426">
    <property type="entry name" value="Huntingtin_fam"/>
</dbReference>
<dbReference type="InterPro" id="IPR024613">
    <property type="entry name" value="Huntingtin_N_HEAT_rpt-2"/>
</dbReference>
<dbReference type="PANTHER" id="PTHR10170:SF10">
    <property type="entry name" value="HUNTINGTIN"/>
    <property type="match status" value="1"/>
</dbReference>
<dbReference type="PANTHER" id="PTHR10170">
    <property type="entry name" value="HUNTINGTON DISEASE PROTEIN"/>
    <property type="match status" value="1"/>
</dbReference>
<dbReference type="Pfam" id="PF20925">
    <property type="entry name" value="Htt_bridge"/>
    <property type="match status" value="1"/>
</dbReference>
<dbReference type="Pfam" id="PF20927">
    <property type="entry name" value="Htt_C-HEAT"/>
    <property type="match status" value="1"/>
</dbReference>
<dbReference type="Pfam" id="PF12372">
    <property type="entry name" value="Htt_N-HEAT"/>
    <property type="match status" value="1"/>
</dbReference>
<dbReference type="Pfam" id="PF20926">
    <property type="entry name" value="Htt_N-HEAT_1"/>
    <property type="match status" value="1"/>
</dbReference>
<dbReference type="PRINTS" id="PR00375">
    <property type="entry name" value="HUNTINGTIN"/>
</dbReference>
<dbReference type="SUPFAM" id="SSF48371">
    <property type="entry name" value="ARM repeat"/>
    <property type="match status" value="2"/>
</dbReference>
<dbReference type="PROSITE" id="PS50077">
    <property type="entry name" value="HEAT_REPEAT"/>
    <property type="match status" value="1"/>
</dbReference>
<comment type="function">
    <text>May play a role in microtubule-mediated transport or vesicle function.</text>
</comment>
<comment type="subcellular location">
    <subcellularLocation>
        <location evidence="2">Cytoplasm</location>
    </subcellularLocation>
    <subcellularLocation>
        <location evidence="2">Nucleus</location>
    </subcellularLocation>
    <text evidence="2">Shuttles between cytoplasm and nucleus in a Ran GTPase-independent manner.</text>
</comment>
<comment type="polymorphism">
    <text evidence="4">The poly-Gln region (four residues) does not appear to be polymorphic, explaining the absence of a HD-like disorder.</text>
</comment>
<comment type="similarity">
    <text evidence="5">Belongs to the huntingtin family.</text>
</comment>
<sequence>MATMEKLMKAFESLKSFQQQQGPPTAEEIVQRQKKEQATTKKDRVSHCLTICENIVAQSLRTSPEFQKLLGIAMEMFLLCSDDSESDVRMVADECLNRIIKALMDSNLPRLQLELYKEIKKNGASRSLRAALWRFAELAHLIRPQKCRPYLVNLLPCLTRITKRQEETIQETLAAAMPKIMAALGHFANDGEIKMLLKSFVANLKSSSPTIRRTAASSAVSVCQHSRRTSYFYTWLLNVLLGLLVPVDEEHHSHLILGVLLTLRYLMPLLQQQVNTISLKGSFGVMQKEADVQPAPEQLLQVYELTLHYTQHWDHNVVTAALELLQQTLRTPPPELLHVLITAGSIQHASVFRQDIESRARSGSILELIAGGGSTCSPLLHRKHRGKMLSGEEDALEDDPEKTDVTTGYFTAVGADNSSAAQVDIITQQPRSSQHTIQPGDSVDLSASSEQGGRGGGASASDTPESPNDEEDMLSRSSSCGANITPETVEDATPENPAQEGRPVGGSGAYDHSLPPSDSSQTTTEGPDSAVTPSDVAELVLDGSESQYSGMQIGTLQDEEDEGTATSSQEDPPDPFLRSALALSKPHLFESRGHNRQGSDSSVDRFIPKDEPPEPEPDNKMSRIKGAIGHYTDRGAEPVVHCVRLLSASFLLTGQKNGLTPDRDVRVSVKALAVSCVGAAAALHPEAFFNSLYLEPLDGLRAEEQQYISDVLGFIDHGDPQIRGATAILCAAIIQAALSKMRYNIHSWLASVQSKTGNPLSLVDLVPLLQKALKDESSVTCKMACSAVRHCIMSLCGSTLSELGLRLVVDLFALKDSSYWLVRTELLETLAEMDFRLVNFLERKSEALHKGEHHYTGRLRLQERVLNDVVIQLLGDDDPRVRHVAASAVSRLVSRLFFDCDQGQADPVVAIARDQSSVYLQLLMHETQPPSQLTVSTITRTYRGFNLSNNVADVTVENNLSRVVTAVSHAFTSSTSRALTFGCCEALCLLAVHFPICTWTTGWHCGHISSQSSFSSRVGRSRGRTLSVSQSGSTPASSTTSSAVDPERRTLTVGTANMVLSLLSSAWFPLDLSAHQDALLLCGNLLAAVAPKCLRNPWAGEDDSSSSSTNTSGGTHKMEEPWAALSDRAFVAMVEQLFSHLLKVLNICAHVLDDTPPGPPVKATLPSLTNTPSLSPIRRKGKDKDAVDSSSAPLSPKKGNEANTGRPTESTGSTAVHKSTTLGSFYHLPPYLKLYDVLKATHANFKVMLDLHSNQEKFGSFLRAALDVLSQLLELATLNDINKCVEEILGYLKSCFSREPTMATVCVQQLLKTLFGTNLASQYEGFLSGPSRSQGKALRLGSSSLRPGLYHYCFMAPYTHFTQALADASLRNMVQAEHEQDTSGWFDVMQKTSNQLRSNIANAARHRGDKNAIHNHIRLFEPLVIKALKQYTTSTSVALQRQVLDLLAQLVQLRVNYCLLDSDQVFIGFVLKQFEYIEVGQFRDSEAIIPNIFFFLVLLSYERYHSKQIISIPKIIQLCDGIMASGRKAVTHAIPALQPIVHDLFVLRGSNKADAGKELETQKEVVVSMLLRLVQYHQVLEMFILVLQQCHKENEDKWKRLSRQIADVILPMIAKQQMHLDSPEALGVLNTLFETVAPSSLRPVDMLLKSMFTTPVTMASVATVQLWVSGILAVLRVLVSQSTEDIVLSRIHELSLSPHLLSCHTIKRLQQPNLSPSDQPAGDGQQNQEPNGEAQKSLPEETFARFLIQLVGVLLDDISSRHVKVDITEQQHTFYCQQLGTLLMCLIHVFKSGMFRRITVAASRLLKGESGSGHSGIEFYPLEGLNSMVHCLITTHPSLVLLWCQVLLIIDYTNYSWWTEVHQTPKGHSLSCTKLLSPHSSGEGEEKPETRLAMINREIVRRGALILFCDYVCQNLHDSEHLTWLIVNHVRDLIDLSHEPPVQDFISAVHRNSAASGLFIQAIQSRCDNLNSPTMLKKTLQCLEGIHLSQSGSLLMLYVDKLLSTPFRVLARMVDTLACRRVEMLLAETLQNSVAQLPLEELHRIQEYLQTSGLAQRHQRFYSLLDRFRATVSDTSSPSTPVTSHPLDGDPPPAPELVIADKEWYVALVKSQCCLHGDVSLLETTELLTKLPPADLLSVMSCKEFNLSLLCPCLSLGVQRLLRGQGSLLLETALQVTLEQLAGATGLLPVPHHSFIPTSHPQSHWKQLAEVYGDPGFYSRVLSLCRALSQYLLTVKQLPSSLRIPSDKEHLITTFTCAATEVVVWHLLQDQLPLSVDLQWALSCLCLALQQPCVWNKLSTPEYNTHTCSLIYCLHHIILAVAVSPGDQLLHPERKKTKALRHSDDEDQVDSVHDNHTLEWQACEIMAELVEGLQSVLSLGHHRNTAFPAFLTPTLRNIIISLSRLPLVNSHTRVPPLVWKLGWSPQPGGEFGTTLPEIPVDFLQEKDVFREFLYRINTLGWSNRTQFEETWATLLGVLVTQPITMDQEEETQQEEDLERTQLNVLAVQAITSLVLSAMTLPTAGNPAVSCLEQQPRNKSLKALETRFGRKLAVIRGEVEREIQALVSKRDNVHTYHPYHAWDPVPSLSAASPGTLISHEKLLLQINTERELGNMDYKLGQVSIHSVWLGNNITPLREEEWGEDEDDEADPPAPTSPPLSPINSRKHRAGVDIHSCSQFLLELYSQWVIPGSPSNRKTPTILISEVVRSLLAVSDLFTERNQFDMMFSTLMELQKLHPPEDEILNQYLVPAICKAAAVLGMDKAIAEPVCRLLETTLRSTHLPSRMGALHGVLYVLECDLLDDTAKQLIPTVSEYLLSNLRAIAHCVNLHNQQHVLVMCAVAFYMMENYPLDVGTEFMAGIIQLCGVMVSASEDSTPSIIYHCVLRGLERLLLSEQLSRVDGEALVKLSVDRVNMPSPHRAMAALGLMLTCMYTGKEKASPAARSAHSDPQVPDSESIIVAMERVSVLFDRIRKGLPSEARVVARILPQFLDDFFPPQDIMNKVIGEFLSNQQPYPQFMATVVYKVFQTLHATGQSSMVRDWVLLSLSNFTQRTPVAMAMWSLSCFFVSASTSQWISALLPHVISRMGSSDVVDVNLFCLVAMDFYRHQIDEELDRRAFQSVFETVASPGSPYFQLLACLQSIHQDKSL</sequence>
<reference key="1">
    <citation type="journal article" date="1995" name="Nat. Genet.">
        <title>Comparative sequence analysis of the human and pufferfish Huntington's disease genes.</title>
        <authorList>
            <person name="Baxendale S."/>
            <person name="Abdulla S."/>
            <person name="Elgar G."/>
            <person name="Buck D."/>
            <person name="Berks M."/>
            <person name="Micklem G."/>
            <person name="Durbin R."/>
            <person name="Bates G."/>
            <person name="Brenner S."/>
            <person name="Beck S."/>
            <person name="Lehrach H."/>
        </authorList>
    </citation>
    <scope>NUCLEOTIDE SEQUENCE [GENOMIC DNA]</scope>
</reference>
<gene>
    <name type="primary">htt</name>
    <name type="synonym">hd</name>
</gene>
<evidence type="ECO:0000250" key="1"/>
<evidence type="ECO:0000250" key="2">
    <source>
        <dbReference type="UniProtKB" id="P42858"/>
    </source>
</evidence>
<evidence type="ECO:0000256" key="3">
    <source>
        <dbReference type="SAM" id="MobiDB-lite"/>
    </source>
</evidence>
<evidence type="ECO:0000269" key="4">
    <source>
    </source>
</evidence>
<evidence type="ECO:0000305" key="5"/>
<name>HD_TAKRU</name>
<accession>P51112</accession>
<proteinExistence type="inferred from homology"/>